<gene>
    <name evidence="1" type="primary">gatB</name>
    <name type="ordered locus">SPD_0396</name>
</gene>
<evidence type="ECO:0000255" key="1">
    <source>
        <dbReference type="HAMAP-Rule" id="MF_00121"/>
    </source>
</evidence>
<name>GATB_STRP2</name>
<accession>Q04M42</accession>
<proteinExistence type="inferred from homology"/>
<protein>
    <recommendedName>
        <fullName evidence="1">Aspartyl/glutamyl-tRNA(Asn/Gln) amidotransferase subunit B</fullName>
        <shortName evidence="1">Asp/Glu-ADT subunit B</shortName>
        <ecNumber evidence="1">6.3.5.-</ecNumber>
    </recommendedName>
</protein>
<dbReference type="EC" id="6.3.5.-" evidence="1"/>
<dbReference type="EMBL" id="CP000410">
    <property type="protein sequence ID" value="ABJ53922.1"/>
    <property type="molecule type" value="Genomic_DNA"/>
</dbReference>
<dbReference type="RefSeq" id="WP_001008652.1">
    <property type="nucleotide sequence ID" value="NZ_JAMLJR010000009.1"/>
</dbReference>
<dbReference type="SMR" id="Q04M42"/>
<dbReference type="PaxDb" id="373153-SPD_0396"/>
<dbReference type="KEGG" id="spd:SPD_0396"/>
<dbReference type="eggNOG" id="COG0064">
    <property type="taxonomic scope" value="Bacteria"/>
</dbReference>
<dbReference type="HOGENOM" id="CLU_019240_0_0_9"/>
<dbReference type="BioCyc" id="SPNE373153:G1G6V-435-MONOMER"/>
<dbReference type="Proteomes" id="UP000001452">
    <property type="component" value="Chromosome"/>
</dbReference>
<dbReference type="GO" id="GO:0050566">
    <property type="term" value="F:asparaginyl-tRNA synthase (glutamine-hydrolyzing) activity"/>
    <property type="evidence" value="ECO:0007669"/>
    <property type="project" value="RHEA"/>
</dbReference>
<dbReference type="GO" id="GO:0005524">
    <property type="term" value="F:ATP binding"/>
    <property type="evidence" value="ECO:0007669"/>
    <property type="project" value="UniProtKB-KW"/>
</dbReference>
<dbReference type="GO" id="GO:0050567">
    <property type="term" value="F:glutaminyl-tRNA synthase (glutamine-hydrolyzing) activity"/>
    <property type="evidence" value="ECO:0007669"/>
    <property type="project" value="UniProtKB-UniRule"/>
</dbReference>
<dbReference type="GO" id="GO:0070681">
    <property type="term" value="P:glutaminyl-tRNAGln biosynthesis via transamidation"/>
    <property type="evidence" value="ECO:0007669"/>
    <property type="project" value="TreeGrafter"/>
</dbReference>
<dbReference type="GO" id="GO:0006412">
    <property type="term" value="P:translation"/>
    <property type="evidence" value="ECO:0007669"/>
    <property type="project" value="UniProtKB-UniRule"/>
</dbReference>
<dbReference type="FunFam" id="1.10.10.410:FF:000001">
    <property type="entry name" value="Aspartyl/glutamyl-tRNA(Asn/Gln) amidotransferase subunit B"/>
    <property type="match status" value="1"/>
</dbReference>
<dbReference type="FunFam" id="1.10.150.380:FF:000001">
    <property type="entry name" value="Aspartyl/glutamyl-tRNA(Asn/Gln) amidotransferase subunit B"/>
    <property type="match status" value="1"/>
</dbReference>
<dbReference type="Gene3D" id="1.10.10.410">
    <property type="match status" value="1"/>
</dbReference>
<dbReference type="Gene3D" id="1.10.150.380">
    <property type="entry name" value="GatB domain, N-terminal subdomain"/>
    <property type="match status" value="1"/>
</dbReference>
<dbReference type="HAMAP" id="MF_00121">
    <property type="entry name" value="GatB"/>
    <property type="match status" value="1"/>
</dbReference>
<dbReference type="InterPro" id="IPR017959">
    <property type="entry name" value="Asn/Gln-tRNA_amidoTrfase_suB/E"/>
</dbReference>
<dbReference type="InterPro" id="IPR006075">
    <property type="entry name" value="Asn/Gln-tRNA_Trfase_suB/E_cat"/>
</dbReference>
<dbReference type="InterPro" id="IPR018027">
    <property type="entry name" value="Asn/Gln_amidotransferase"/>
</dbReference>
<dbReference type="InterPro" id="IPR003789">
    <property type="entry name" value="Asn/Gln_tRNA_amidoTrase-B-like"/>
</dbReference>
<dbReference type="InterPro" id="IPR004413">
    <property type="entry name" value="GatB"/>
</dbReference>
<dbReference type="InterPro" id="IPR042114">
    <property type="entry name" value="GatB_C_1"/>
</dbReference>
<dbReference type="InterPro" id="IPR023168">
    <property type="entry name" value="GatB_Yqey_C_2"/>
</dbReference>
<dbReference type="InterPro" id="IPR017958">
    <property type="entry name" value="Gln-tRNA_amidoTrfase_suB_CS"/>
</dbReference>
<dbReference type="InterPro" id="IPR014746">
    <property type="entry name" value="Gln_synth/guanido_kin_cat_dom"/>
</dbReference>
<dbReference type="NCBIfam" id="TIGR00133">
    <property type="entry name" value="gatB"/>
    <property type="match status" value="1"/>
</dbReference>
<dbReference type="NCBIfam" id="NF004011">
    <property type="entry name" value="PRK05477.1-1"/>
    <property type="match status" value="1"/>
</dbReference>
<dbReference type="NCBIfam" id="NF004012">
    <property type="entry name" value="PRK05477.1-2"/>
    <property type="match status" value="1"/>
</dbReference>
<dbReference type="NCBIfam" id="NF004014">
    <property type="entry name" value="PRK05477.1-4"/>
    <property type="match status" value="1"/>
</dbReference>
<dbReference type="PANTHER" id="PTHR11659">
    <property type="entry name" value="GLUTAMYL-TRNA GLN AMIDOTRANSFERASE SUBUNIT B MITOCHONDRIAL AND PROKARYOTIC PET112-RELATED"/>
    <property type="match status" value="1"/>
</dbReference>
<dbReference type="PANTHER" id="PTHR11659:SF0">
    <property type="entry name" value="GLUTAMYL-TRNA(GLN) AMIDOTRANSFERASE SUBUNIT B, MITOCHONDRIAL"/>
    <property type="match status" value="1"/>
</dbReference>
<dbReference type="Pfam" id="PF02934">
    <property type="entry name" value="GatB_N"/>
    <property type="match status" value="1"/>
</dbReference>
<dbReference type="Pfam" id="PF02637">
    <property type="entry name" value="GatB_Yqey"/>
    <property type="match status" value="1"/>
</dbReference>
<dbReference type="SMART" id="SM00845">
    <property type="entry name" value="GatB_Yqey"/>
    <property type="match status" value="1"/>
</dbReference>
<dbReference type="SUPFAM" id="SSF89095">
    <property type="entry name" value="GatB/YqeY motif"/>
    <property type="match status" value="1"/>
</dbReference>
<dbReference type="SUPFAM" id="SSF55931">
    <property type="entry name" value="Glutamine synthetase/guanido kinase"/>
    <property type="match status" value="1"/>
</dbReference>
<dbReference type="PROSITE" id="PS01234">
    <property type="entry name" value="GATB"/>
    <property type="match status" value="1"/>
</dbReference>
<reference key="1">
    <citation type="journal article" date="2007" name="J. Bacteriol.">
        <title>Genome sequence of Avery's virulent serotype 2 strain D39 of Streptococcus pneumoniae and comparison with that of unencapsulated laboratory strain R6.</title>
        <authorList>
            <person name="Lanie J.A."/>
            <person name="Ng W.-L."/>
            <person name="Kazmierczak K.M."/>
            <person name="Andrzejewski T.M."/>
            <person name="Davidsen T.M."/>
            <person name="Wayne K.J."/>
            <person name="Tettelin H."/>
            <person name="Glass J.I."/>
            <person name="Winkler M.E."/>
        </authorList>
    </citation>
    <scope>NUCLEOTIDE SEQUENCE [LARGE SCALE GENOMIC DNA]</scope>
    <source>
        <strain>D39 / NCTC 7466</strain>
    </source>
</reference>
<sequence length="480" mass="53659">MNFETVIGLEVHVELNTNSKIFSPTSAHFGNDQNANTNVIDWSFPGVLPVLNKGVVDAGIKAALALNMDIHKKMHFDRKNYFYPDNPKAYQISQFDEPIGYNGWIEVELEDGTTKKIGIERAHLEEDAGKNTHGTDGYSYVDLNRQGVPLIEIVSEADMRSPEEAYAYLTALKEVIQYAGISDVKMEEGSMRVDANISLRPYGQEKFGTKTELKNLNSFSNVRKGLEYEVQRQAEILRSGGQIRQETRRYDEANKATILMRVKEGAADYRYFPEPDLPLFEISDEWIEEMRTELPEFPKERRARYVSDLGLSDYDASQLTANKVTSDFFEKAVALGGDAKQVSNWLQGEVAQFLNAEGKTLEQIELTPENLVEMIAIIEDGTISSKIAKKVFVHLAKNGGGAREYVEKAGMVQISDPAILIPIIHQVFADNEAAVADFKSGKRNADKAFTGFLMKATKGQANPQVALKLLAQELAKLKEN</sequence>
<keyword id="KW-0067">ATP-binding</keyword>
<keyword id="KW-0436">Ligase</keyword>
<keyword id="KW-0547">Nucleotide-binding</keyword>
<keyword id="KW-0648">Protein biosynthesis</keyword>
<keyword id="KW-1185">Reference proteome</keyword>
<feature type="chain" id="PRO_1000016043" description="Aspartyl/glutamyl-tRNA(Asn/Gln) amidotransferase subunit B">
    <location>
        <begin position="1"/>
        <end position="480"/>
    </location>
</feature>
<comment type="function">
    <text evidence="1">Allows the formation of correctly charged Asn-tRNA(Asn) or Gln-tRNA(Gln) through the transamidation of misacylated Asp-tRNA(Asn) or Glu-tRNA(Gln) in organisms which lack either or both of asparaginyl-tRNA or glutaminyl-tRNA synthetases. The reaction takes place in the presence of glutamine and ATP through an activated phospho-Asp-tRNA(Asn) or phospho-Glu-tRNA(Gln).</text>
</comment>
<comment type="catalytic activity">
    <reaction evidence="1">
        <text>L-glutamyl-tRNA(Gln) + L-glutamine + ATP + H2O = L-glutaminyl-tRNA(Gln) + L-glutamate + ADP + phosphate + H(+)</text>
        <dbReference type="Rhea" id="RHEA:17521"/>
        <dbReference type="Rhea" id="RHEA-COMP:9681"/>
        <dbReference type="Rhea" id="RHEA-COMP:9684"/>
        <dbReference type="ChEBI" id="CHEBI:15377"/>
        <dbReference type="ChEBI" id="CHEBI:15378"/>
        <dbReference type="ChEBI" id="CHEBI:29985"/>
        <dbReference type="ChEBI" id="CHEBI:30616"/>
        <dbReference type="ChEBI" id="CHEBI:43474"/>
        <dbReference type="ChEBI" id="CHEBI:58359"/>
        <dbReference type="ChEBI" id="CHEBI:78520"/>
        <dbReference type="ChEBI" id="CHEBI:78521"/>
        <dbReference type="ChEBI" id="CHEBI:456216"/>
    </reaction>
</comment>
<comment type="catalytic activity">
    <reaction evidence="1">
        <text>L-aspartyl-tRNA(Asn) + L-glutamine + ATP + H2O = L-asparaginyl-tRNA(Asn) + L-glutamate + ADP + phosphate + 2 H(+)</text>
        <dbReference type="Rhea" id="RHEA:14513"/>
        <dbReference type="Rhea" id="RHEA-COMP:9674"/>
        <dbReference type="Rhea" id="RHEA-COMP:9677"/>
        <dbReference type="ChEBI" id="CHEBI:15377"/>
        <dbReference type="ChEBI" id="CHEBI:15378"/>
        <dbReference type="ChEBI" id="CHEBI:29985"/>
        <dbReference type="ChEBI" id="CHEBI:30616"/>
        <dbReference type="ChEBI" id="CHEBI:43474"/>
        <dbReference type="ChEBI" id="CHEBI:58359"/>
        <dbReference type="ChEBI" id="CHEBI:78515"/>
        <dbReference type="ChEBI" id="CHEBI:78516"/>
        <dbReference type="ChEBI" id="CHEBI:456216"/>
    </reaction>
</comment>
<comment type="subunit">
    <text evidence="1">Heterotrimer of A, B and C subunits.</text>
</comment>
<comment type="similarity">
    <text evidence="1">Belongs to the GatB/GatE family. GatB subfamily.</text>
</comment>
<organism>
    <name type="scientific">Streptococcus pneumoniae serotype 2 (strain D39 / NCTC 7466)</name>
    <dbReference type="NCBI Taxonomy" id="373153"/>
    <lineage>
        <taxon>Bacteria</taxon>
        <taxon>Bacillati</taxon>
        <taxon>Bacillota</taxon>
        <taxon>Bacilli</taxon>
        <taxon>Lactobacillales</taxon>
        <taxon>Streptococcaceae</taxon>
        <taxon>Streptococcus</taxon>
    </lineage>
</organism>